<protein>
    <recommendedName>
        <fullName>Uncharacterized protein YkvS</fullName>
    </recommendedName>
</protein>
<sequence length="61" mass="6956">MKIAKVGNVIEFKNGLTGVVEKVNENSVIVDVTIMDNYRDLELDSLTVVNHKNYKIIRDSY</sequence>
<keyword id="KW-1185">Reference proteome</keyword>
<reference key="1">
    <citation type="journal article" date="1997" name="Nature">
        <title>The complete genome sequence of the Gram-positive bacterium Bacillus subtilis.</title>
        <authorList>
            <person name="Kunst F."/>
            <person name="Ogasawara N."/>
            <person name="Moszer I."/>
            <person name="Albertini A.M."/>
            <person name="Alloni G."/>
            <person name="Azevedo V."/>
            <person name="Bertero M.G."/>
            <person name="Bessieres P."/>
            <person name="Bolotin A."/>
            <person name="Borchert S."/>
            <person name="Borriss R."/>
            <person name="Boursier L."/>
            <person name="Brans A."/>
            <person name="Braun M."/>
            <person name="Brignell S.C."/>
            <person name="Bron S."/>
            <person name="Brouillet S."/>
            <person name="Bruschi C.V."/>
            <person name="Caldwell B."/>
            <person name="Capuano V."/>
            <person name="Carter N.M."/>
            <person name="Choi S.-K."/>
            <person name="Codani J.-J."/>
            <person name="Connerton I.F."/>
            <person name="Cummings N.J."/>
            <person name="Daniel R.A."/>
            <person name="Denizot F."/>
            <person name="Devine K.M."/>
            <person name="Duesterhoeft A."/>
            <person name="Ehrlich S.D."/>
            <person name="Emmerson P.T."/>
            <person name="Entian K.-D."/>
            <person name="Errington J."/>
            <person name="Fabret C."/>
            <person name="Ferrari E."/>
            <person name="Foulger D."/>
            <person name="Fritz C."/>
            <person name="Fujita M."/>
            <person name="Fujita Y."/>
            <person name="Fuma S."/>
            <person name="Galizzi A."/>
            <person name="Galleron N."/>
            <person name="Ghim S.-Y."/>
            <person name="Glaser P."/>
            <person name="Goffeau A."/>
            <person name="Golightly E.J."/>
            <person name="Grandi G."/>
            <person name="Guiseppi G."/>
            <person name="Guy B.J."/>
            <person name="Haga K."/>
            <person name="Haiech J."/>
            <person name="Harwood C.R."/>
            <person name="Henaut A."/>
            <person name="Hilbert H."/>
            <person name="Holsappel S."/>
            <person name="Hosono S."/>
            <person name="Hullo M.-F."/>
            <person name="Itaya M."/>
            <person name="Jones L.-M."/>
            <person name="Joris B."/>
            <person name="Karamata D."/>
            <person name="Kasahara Y."/>
            <person name="Klaerr-Blanchard M."/>
            <person name="Klein C."/>
            <person name="Kobayashi Y."/>
            <person name="Koetter P."/>
            <person name="Koningstein G."/>
            <person name="Krogh S."/>
            <person name="Kumano M."/>
            <person name="Kurita K."/>
            <person name="Lapidus A."/>
            <person name="Lardinois S."/>
            <person name="Lauber J."/>
            <person name="Lazarevic V."/>
            <person name="Lee S.-M."/>
            <person name="Levine A."/>
            <person name="Liu H."/>
            <person name="Masuda S."/>
            <person name="Mauel C."/>
            <person name="Medigue C."/>
            <person name="Medina N."/>
            <person name="Mellado R.P."/>
            <person name="Mizuno M."/>
            <person name="Moestl D."/>
            <person name="Nakai S."/>
            <person name="Noback M."/>
            <person name="Noone D."/>
            <person name="O'Reilly M."/>
            <person name="Ogawa K."/>
            <person name="Ogiwara A."/>
            <person name="Oudega B."/>
            <person name="Park S.-H."/>
            <person name="Parro V."/>
            <person name="Pohl T.M."/>
            <person name="Portetelle D."/>
            <person name="Porwollik S."/>
            <person name="Prescott A.M."/>
            <person name="Presecan E."/>
            <person name="Pujic P."/>
            <person name="Purnelle B."/>
            <person name="Rapoport G."/>
            <person name="Rey M."/>
            <person name="Reynolds S."/>
            <person name="Rieger M."/>
            <person name="Rivolta C."/>
            <person name="Rocha E."/>
            <person name="Roche B."/>
            <person name="Rose M."/>
            <person name="Sadaie Y."/>
            <person name="Sato T."/>
            <person name="Scanlan E."/>
            <person name="Schleich S."/>
            <person name="Schroeter R."/>
            <person name="Scoffone F."/>
            <person name="Sekiguchi J."/>
            <person name="Sekowska A."/>
            <person name="Seror S.J."/>
            <person name="Serror P."/>
            <person name="Shin B.-S."/>
            <person name="Soldo B."/>
            <person name="Sorokin A."/>
            <person name="Tacconi E."/>
            <person name="Takagi T."/>
            <person name="Takahashi H."/>
            <person name="Takemaru K."/>
            <person name="Takeuchi M."/>
            <person name="Tamakoshi A."/>
            <person name="Tanaka T."/>
            <person name="Terpstra P."/>
            <person name="Tognoni A."/>
            <person name="Tosato V."/>
            <person name="Uchiyama S."/>
            <person name="Vandenbol M."/>
            <person name="Vannier F."/>
            <person name="Vassarotti A."/>
            <person name="Viari A."/>
            <person name="Wambutt R."/>
            <person name="Wedler E."/>
            <person name="Wedler H."/>
            <person name="Weitzenegger T."/>
            <person name="Winters P."/>
            <person name="Wipat A."/>
            <person name="Yamamoto H."/>
            <person name="Yamane K."/>
            <person name="Yasumoto K."/>
            <person name="Yata K."/>
            <person name="Yoshida K."/>
            <person name="Yoshikawa H.-F."/>
            <person name="Zumstein E."/>
            <person name="Yoshikawa H."/>
            <person name="Danchin A."/>
        </authorList>
    </citation>
    <scope>NUCLEOTIDE SEQUENCE [LARGE SCALE GENOMIC DNA]</scope>
    <source>
        <strain>168</strain>
    </source>
</reference>
<organism>
    <name type="scientific">Bacillus subtilis (strain 168)</name>
    <dbReference type="NCBI Taxonomy" id="224308"/>
    <lineage>
        <taxon>Bacteria</taxon>
        <taxon>Bacillati</taxon>
        <taxon>Bacillota</taxon>
        <taxon>Bacilli</taxon>
        <taxon>Bacillales</taxon>
        <taxon>Bacillaceae</taxon>
        <taxon>Bacillus</taxon>
    </lineage>
</organism>
<feature type="chain" id="PRO_0000360183" description="Uncharacterized protein YkvS">
    <location>
        <begin position="1"/>
        <end position="61"/>
    </location>
</feature>
<accession>O31684</accession>
<gene>
    <name type="primary">ykvS</name>
    <name type="ordered locus">BSU13810</name>
</gene>
<proteinExistence type="predicted"/>
<name>YKVS_BACSU</name>
<dbReference type="EMBL" id="AL009126">
    <property type="protein sequence ID" value="CAB13254.2"/>
    <property type="molecule type" value="Genomic_DNA"/>
</dbReference>
<dbReference type="PIR" id="B69869">
    <property type="entry name" value="B69869"/>
</dbReference>
<dbReference type="RefSeq" id="NP_389264.2">
    <property type="nucleotide sequence ID" value="NC_000964.3"/>
</dbReference>
<dbReference type="RefSeq" id="WP_003232446.1">
    <property type="nucleotide sequence ID" value="NZ_OZ025638.1"/>
</dbReference>
<dbReference type="SMR" id="O31684"/>
<dbReference type="FunCoup" id="O31684">
    <property type="interactions" value="22"/>
</dbReference>
<dbReference type="STRING" id="224308.BSU13810"/>
<dbReference type="PaxDb" id="224308-BSU13810"/>
<dbReference type="EnsemblBacteria" id="CAB13254">
    <property type="protein sequence ID" value="CAB13254"/>
    <property type="gene ID" value="BSU_13810"/>
</dbReference>
<dbReference type="GeneID" id="939299"/>
<dbReference type="KEGG" id="bsu:BSU13810"/>
<dbReference type="PATRIC" id="fig|224308.179.peg.1503"/>
<dbReference type="eggNOG" id="COG4873">
    <property type="taxonomic scope" value="Bacteria"/>
</dbReference>
<dbReference type="InParanoid" id="O31684"/>
<dbReference type="OrthoDB" id="2692124at2"/>
<dbReference type="PhylomeDB" id="O31684"/>
<dbReference type="BioCyc" id="BSUB:BSU13810-MONOMER"/>
<dbReference type="PRO" id="PR:O31684"/>
<dbReference type="Proteomes" id="UP000001570">
    <property type="component" value="Chromosome"/>
</dbReference>
<dbReference type="InterPro" id="IPR018690">
    <property type="entry name" value="DUF2187"/>
</dbReference>
<dbReference type="Pfam" id="PF09953">
    <property type="entry name" value="DUF2187"/>
    <property type="match status" value="1"/>
</dbReference>